<name>CAPSD_PLRV</name>
<sequence>MSTVVVKGNVNGGVQQPRRRRRQSLRRRANRVQPVVMVTASGQPRRRRRRRGGNRRSRRTGVPRGRGSSETFVFTKDNLMGNSQGSFTFGPSLSDCPAFKDGILKAYHEYKITSILLQFVSEASSTSSGSIAYELDPHCKVSSLQSYVNKFQITKGGAKTYQARMINGVEWHDSSEDQCRILWKGNGKSSDTAGSFRVTIRVALQNPK</sequence>
<comment type="function">
    <text evidence="1">Major capsid protein that self-assembles to form an icosahedral capsid with a T=3 symmetry, about 23 nm in diameter, and consisting of 180 capsid proteins monomers. Most of the 180 monomers are the major capsid protein, but a small percentage contain the minor capsid protein, which has a long C-terminal extension.</text>
</comment>
<comment type="subcellular location">
    <subcellularLocation>
        <location evidence="1">Virion</location>
    </subcellularLocation>
</comment>
<comment type="domain">
    <text evidence="2">The N-terminus like those of many plant virus capsid proteins is highly basic. These regions may be involved in protein-RNA interaction.</text>
</comment>
<comment type="similarity">
    <text evidence="4">Belongs to the luteoviruses capsid protein family.</text>
</comment>
<gene>
    <name type="ORF">ORF3</name>
</gene>
<feature type="chain" id="PRO_0000222410" description="Major capsid protein">
    <location>
        <begin position="1"/>
        <end position="208"/>
    </location>
</feature>
<feature type="region of interest" description="Disordered" evidence="3">
    <location>
        <begin position="1"/>
        <end position="69"/>
    </location>
</feature>
<feature type="compositionally biased region" description="Low complexity" evidence="3">
    <location>
        <begin position="1"/>
        <end position="16"/>
    </location>
</feature>
<feature type="compositionally biased region" description="Basic residues" evidence="3">
    <location>
        <begin position="17"/>
        <end position="30"/>
    </location>
</feature>
<feature type="compositionally biased region" description="Basic residues" evidence="3">
    <location>
        <begin position="44"/>
        <end position="61"/>
    </location>
</feature>
<reference key="1">
    <citation type="journal article" date="1989" name="Nucleic Acids Res.">
        <title>Nucleotide sequence of the potato leafroll virus coat protein gene.</title>
        <authorList>
            <person name="Prill B."/>
            <person name="Maiss E."/>
            <person name="Timpe V."/>
            <person name="Casper R."/>
        </authorList>
    </citation>
    <scope>NUCLEOTIDE SEQUENCE [GENOMIC RNA]</scope>
</reference>
<reference key="2">
    <citation type="journal article" date="1989" name="Arch. Virol.">
        <title>Cloning of the gene for the capsid protein of potato leafroll virus.</title>
        <authorList>
            <person name="Tacke E."/>
            <person name="Sarkar S."/>
            <person name="Salamini F."/>
            <person name="Rohde W."/>
        </authorList>
    </citation>
    <scope>NUCLEOTIDE SEQUENCE [GENOMIC RNA]</scope>
</reference>
<evidence type="ECO:0000250" key="1">
    <source>
        <dbReference type="UniProtKB" id="P17522"/>
    </source>
</evidence>
<evidence type="ECO:0000250" key="2">
    <source>
        <dbReference type="UniProtKB" id="P17525"/>
    </source>
</evidence>
<evidence type="ECO:0000256" key="3">
    <source>
        <dbReference type="SAM" id="MobiDB-lite"/>
    </source>
</evidence>
<evidence type="ECO:0000305" key="4"/>
<accession>P10470</accession>
<organismHost>
    <name type="scientific">Solanum tuberosum</name>
    <name type="common">Potato</name>
    <dbReference type="NCBI Taxonomy" id="4113"/>
</organismHost>
<protein>
    <recommendedName>
        <fullName>Major capsid protein</fullName>
    </recommendedName>
    <alternativeName>
        <fullName>Coat protein</fullName>
        <shortName>CP</shortName>
    </alternativeName>
    <alternativeName>
        <fullName evidence="1">P3</fullName>
    </alternativeName>
</protein>
<proteinExistence type="inferred from homology"/>
<organism>
    <name type="scientific">Potato leafroll virus</name>
    <name type="common">PLrV</name>
    <dbReference type="NCBI Taxonomy" id="12045"/>
    <lineage>
        <taxon>Viruses</taxon>
        <taxon>Riboviria</taxon>
        <taxon>Orthornavirae</taxon>
        <taxon>Pisuviricota</taxon>
        <taxon>Pisoniviricetes</taxon>
        <taxon>Sobelivirales</taxon>
        <taxon>Solemoviridae</taxon>
        <taxon>Polerovirus</taxon>
    </lineage>
</organism>
<dbReference type="EMBL" id="X13906">
    <property type="protein sequence ID" value="CAA32106.1"/>
    <property type="molecule type" value="Genomic_RNA"/>
</dbReference>
<dbReference type="SMR" id="P10470"/>
<dbReference type="GO" id="GO:0039617">
    <property type="term" value="C:T=3 icosahedral viral capsid"/>
    <property type="evidence" value="ECO:0007669"/>
    <property type="project" value="UniProtKB-KW"/>
</dbReference>
<dbReference type="GO" id="GO:0005198">
    <property type="term" value="F:structural molecule activity"/>
    <property type="evidence" value="ECO:0007669"/>
    <property type="project" value="InterPro"/>
</dbReference>
<dbReference type="Gene3D" id="2.60.120.20">
    <property type="match status" value="1"/>
</dbReference>
<dbReference type="InterPro" id="IPR001517">
    <property type="entry name" value="Luteo_coat"/>
</dbReference>
<dbReference type="InterPro" id="IPR029053">
    <property type="entry name" value="Viral_coat"/>
</dbReference>
<dbReference type="Pfam" id="PF00894">
    <property type="entry name" value="Luteo_coat"/>
    <property type="match status" value="1"/>
</dbReference>
<dbReference type="PRINTS" id="PR00915">
    <property type="entry name" value="LUTEOGP1COAT"/>
</dbReference>
<keyword id="KW-0167">Capsid protein</keyword>
<keyword id="KW-1142">T=3 icosahedral capsid protein</keyword>
<keyword id="KW-0946">Virion</keyword>